<accession>P84650</accession>
<protein>
    <recommendedName>
        <fullName>Enantioselective amidase</fullName>
        <ecNumber>3.5.1.4</ecNumber>
    </recommendedName>
</protein>
<dbReference type="EC" id="3.5.1.4"/>
<dbReference type="SMR" id="P84650"/>
<dbReference type="GO" id="GO:0004040">
    <property type="term" value="F:amidase activity"/>
    <property type="evidence" value="ECO:0007669"/>
    <property type="project" value="UniProtKB-EC"/>
</dbReference>
<dbReference type="Gene3D" id="3.90.1300.10">
    <property type="entry name" value="Amidase signature (AS) domain"/>
    <property type="match status" value="1"/>
</dbReference>
<dbReference type="InterPro" id="IPR000120">
    <property type="entry name" value="Amidase"/>
</dbReference>
<dbReference type="InterPro" id="IPR020556">
    <property type="entry name" value="Amidase_CS"/>
</dbReference>
<dbReference type="InterPro" id="IPR023631">
    <property type="entry name" value="Amidase_dom"/>
</dbReference>
<dbReference type="InterPro" id="IPR036928">
    <property type="entry name" value="AS_sf"/>
</dbReference>
<dbReference type="NCBIfam" id="NF005565">
    <property type="entry name" value="PRK07235.1"/>
    <property type="match status" value="1"/>
</dbReference>
<dbReference type="PANTHER" id="PTHR11895:SF170">
    <property type="entry name" value="AMIDASE"/>
    <property type="match status" value="1"/>
</dbReference>
<dbReference type="PANTHER" id="PTHR11895">
    <property type="entry name" value="TRANSAMIDASE"/>
    <property type="match status" value="1"/>
</dbReference>
<dbReference type="Pfam" id="PF01425">
    <property type="entry name" value="Amidase"/>
    <property type="match status" value="1"/>
</dbReference>
<dbReference type="SUPFAM" id="SSF75304">
    <property type="entry name" value="Amidase signature (AS) enzymes"/>
    <property type="match status" value="1"/>
</dbReference>
<dbReference type="PROSITE" id="PS00571">
    <property type="entry name" value="AMIDASES"/>
    <property type="match status" value="1"/>
</dbReference>
<gene>
    <name type="primary">amdA</name>
</gene>
<proteinExistence type="evidence at protein level"/>
<evidence type="ECO:0000250" key="1">
    <source>
        <dbReference type="UniProtKB" id="P97612"/>
    </source>
</evidence>
<evidence type="ECO:0000255" key="2"/>
<evidence type="ECO:0000269" key="3">
    <source ref="1"/>
</evidence>
<name>AMID_RHORH</name>
<reference key="1">
    <citation type="submission" date="2005-09" db="UniProtKB">
        <title>New amidase from Rhodococcus rhodochrous possesses unusual substrate specificity.</title>
        <authorList>
            <person name="Pertsovich S.I."/>
            <person name="Guranda D.T."/>
            <person name="Svedas V.K."/>
        </authorList>
    </citation>
    <scope>PROTEIN SEQUENCE</scope>
    <scope>CATALYTIC ACTIVITY</scope>
    <scope>SUBUNIT</scope>
    <scope>INDUCTION</scope>
    <source>
        <strain evidence="3">M8</strain>
    </source>
</reference>
<feature type="chain" id="PRO_0000105127" description="Enantioselective amidase">
    <location>
        <begin position="1"/>
        <end position="517"/>
    </location>
</feature>
<feature type="active site" description="Charge relay system" evidence="1">
    <location>
        <position position="96"/>
    </location>
</feature>
<feature type="active site" description="Charge relay system" evidence="1">
    <location>
        <position position="173"/>
    </location>
</feature>
<feature type="active site" description="Acyl-ester intermediate" evidence="1">
    <location>
        <position position="197"/>
    </location>
</feature>
<keyword id="KW-0903">Direct protein sequencing</keyword>
<keyword id="KW-0378">Hydrolase</keyword>
<sequence length="517" mass="54735">MSSLTPPNSNQMSALNNHFFFGLTTPKLEEFAPALEATLAYAVTDERVYERTAPEPPDRSWTTPTAAENPLSAWYVTTSISYTDGGPLAGRTVAIKDNVTVAGVPMMNGSRVVEGFTPRYDATVLRRLLDAGATKAGKAVCEDLCFSGSSVTSHPQPVRNPWDESHGYKAGGSSSGSEALVASGHVDCAVGGDGGGSIRIPLACCGIVGCKPTHGLKPYTFPIERTIDHLGPMTRTVGDAAMMLTVLAGTDGLDPRQADHRIEPVDYLAALAEPAGLRVVVVTEGFDTPVQDAAVDDAVRAAILVLRSGCLTVEIVSIPIHLDAFAVWNVIATEGAAYQMLDGNYYGMNTGGFYDPELIIHFSRRRLEHGHQLSKTVKLVGMGGRYTSETGGGKYAAAARQLVREVRAAYDLALARYDVLVMPTLPYTATKIPITDIPLADYLDTALSMIINTAPFDVTGHPALCPVAGAVHGLPVGMMIIGKAHDDDATVLRVAAFEHAVGNYPVPPEAASTLATL</sequence>
<organism>
    <name type="scientific">Rhodococcus rhodochrous</name>
    <dbReference type="NCBI Taxonomy" id="1829"/>
    <lineage>
        <taxon>Bacteria</taxon>
        <taxon>Bacillati</taxon>
        <taxon>Actinomycetota</taxon>
        <taxon>Actinomycetes</taxon>
        <taxon>Mycobacteriales</taxon>
        <taxon>Nocardiaceae</taxon>
        <taxon>Rhodococcus</taxon>
    </lineage>
</organism>
<comment type="catalytic activity">
    <reaction evidence="3">
        <text>a monocarboxylic acid amide + H2O = a monocarboxylate + NH4(+)</text>
        <dbReference type="Rhea" id="RHEA:12020"/>
        <dbReference type="ChEBI" id="CHEBI:15377"/>
        <dbReference type="ChEBI" id="CHEBI:28938"/>
        <dbReference type="ChEBI" id="CHEBI:35757"/>
        <dbReference type="ChEBI" id="CHEBI:83628"/>
        <dbReference type="EC" id="3.5.1.4"/>
    </reaction>
</comment>
<comment type="subunit">
    <text evidence="3">Homooctamer.</text>
</comment>
<comment type="induction">
    <text evidence="3">By aromatic and aliphatic amides.</text>
</comment>
<comment type="similarity">
    <text evidence="2">Belongs to the amidase family.</text>
</comment>